<proteinExistence type="inferred from homology"/>
<feature type="chain" id="PRO_1000007297" description="Large ribosomal subunit protein bL28">
    <location>
        <begin position="1"/>
        <end position="63"/>
    </location>
</feature>
<reference key="1">
    <citation type="submission" date="2005-10" db="EMBL/GenBank/DDBJ databases">
        <title>Complete sequence of Pelobacter carbinolicus DSM 2380.</title>
        <authorList>
            <person name="Copeland A."/>
            <person name="Lucas S."/>
            <person name="Lapidus A."/>
            <person name="Barry K."/>
            <person name="Detter J.C."/>
            <person name="Glavina T."/>
            <person name="Hammon N."/>
            <person name="Israni S."/>
            <person name="Pitluck S."/>
            <person name="Chertkov O."/>
            <person name="Schmutz J."/>
            <person name="Larimer F."/>
            <person name="Land M."/>
            <person name="Kyrpides N."/>
            <person name="Ivanova N."/>
            <person name="Richardson P."/>
        </authorList>
    </citation>
    <scope>NUCLEOTIDE SEQUENCE [LARGE SCALE GENOMIC DNA]</scope>
    <source>
        <strain>DSM 2380 / NBRC 103641 / GraBd1</strain>
    </source>
</reference>
<dbReference type="EMBL" id="CP000142">
    <property type="protein sequence ID" value="ABA88538.1"/>
    <property type="molecule type" value="Genomic_DNA"/>
</dbReference>
<dbReference type="RefSeq" id="WP_011341013.1">
    <property type="nucleotide sequence ID" value="NC_007498.2"/>
</dbReference>
<dbReference type="SMR" id="Q3A519"/>
<dbReference type="STRING" id="338963.Pcar_1289"/>
<dbReference type="KEGG" id="pca:Pcar_1289"/>
<dbReference type="eggNOG" id="COG0227">
    <property type="taxonomic scope" value="Bacteria"/>
</dbReference>
<dbReference type="HOGENOM" id="CLU_064548_7_0_7"/>
<dbReference type="OrthoDB" id="9805609at2"/>
<dbReference type="Proteomes" id="UP000002534">
    <property type="component" value="Chromosome"/>
</dbReference>
<dbReference type="GO" id="GO:1990904">
    <property type="term" value="C:ribonucleoprotein complex"/>
    <property type="evidence" value="ECO:0007669"/>
    <property type="project" value="UniProtKB-KW"/>
</dbReference>
<dbReference type="GO" id="GO:0005840">
    <property type="term" value="C:ribosome"/>
    <property type="evidence" value="ECO:0007669"/>
    <property type="project" value="UniProtKB-KW"/>
</dbReference>
<dbReference type="GO" id="GO:0003735">
    <property type="term" value="F:structural constituent of ribosome"/>
    <property type="evidence" value="ECO:0007669"/>
    <property type="project" value="InterPro"/>
</dbReference>
<dbReference type="GO" id="GO:0006412">
    <property type="term" value="P:translation"/>
    <property type="evidence" value="ECO:0007669"/>
    <property type="project" value="UniProtKB-UniRule"/>
</dbReference>
<dbReference type="Gene3D" id="2.20.150.30">
    <property type="match status" value="1"/>
</dbReference>
<dbReference type="Gene3D" id="2.30.170.40">
    <property type="entry name" value="Ribosomal protein L28/L24"/>
    <property type="match status" value="1"/>
</dbReference>
<dbReference type="HAMAP" id="MF_00373">
    <property type="entry name" value="Ribosomal_bL28"/>
    <property type="match status" value="1"/>
</dbReference>
<dbReference type="InterPro" id="IPR050096">
    <property type="entry name" value="Bacterial_rp_bL28"/>
</dbReference>
<dbReference type="InterPro" id="IPR026569">
    <property type="entry name" value="Ribosomal_bL28"/>
</dbReference>
<dbReference type="InterPro" id="IPR034704">
    <property type="entry name" value="Ribosomal_bL28/bL31-like_sf"/>
</dbReference>
<dbReference type="InterPro" id="IPR001383">
    <property type="entry name" value="Ribosomal_bL28_bact-type"/>
</dbReference>
<dbReference type="InterPro" id="IPR037147">
    <property type="entry name" value="Ribosomal_bL28_sf"/>
</dbReference>
<dbReference type="NCBIfam" id="TIGR00009">
    <property type="entry name" value="L28"/>
    <property type="match status" value="1"/>
</dbReference>
<dbReference type="PANTHER" id="PTHR39080">
    <property type="entry name" value="50S RIBOSOMAL PROTEIN L28"/>
    <property type="match status" value="1"/>
</dbReference>
<dbReference type="PANTHER" id="PTHR39080:SF1">
    <property type="entry name" value="LARGE RIBOSOMAL SUBUNIT PROTEIN BL28A"/>
    <property type="match status" value="1"/>
</dbReference>
<dbReference type="Pfam" id="PF00830">
    <property type="entry name" value="Ribosomal_L28"/>
    <property type="match status" value="1"/>
</dbReference>
<dbReference type="SUPFAM" id="SSF143800">
    <property type="entry name" value="L28p-like"/>
    <property type="match status" value="1"/>
</dbReference>
<sequence>MSRVCDICGKKPTTGNNVSHAHNKTRKVWYPNLQKVRALHKGKVQAIKVCTRCLRSGAVTKAI</sequence>
<name>RL28_SYNC1</name>
<accession>Q3A519</accession>
<evidence type="ECO:0000255" key="1">
    <source>
        <dbReference type="HAMAP-Rule" id="MF_00373"/>
    </source>
</evidence>
<evidence type="ECO:0000305" key="2"/>
<gene>
    <name evidence="1" type="primary">rpmB</name>
    <name type="ordered locus">Pcar_1289</name>
</gene>
<organism>
    <name type="scientific">Syntrophotalea carbinolica (strain DSM 2380 / NBRC 103641 / GraBd1)</name>
    <name type="common">Pelobacter carbinolicus</name>
    <dbReference type="NCBI Taxonomy" id="338963"/>
    <lineage>
        <taxon>Bacteria</taxon>
        <taxon>Pseudomonadati</taxon>
        <taxon>Thermodesulfobacteriota</taxon>
        <taxon>Desulfuromonadia</taxon>
        <taxon>Desulfuromonadales</taxon>
        <taxon>Syntrophotaleaceae</taxon>
        <taxon>Syntrophotalea</taxon>
    </lineage>
</organism>
<protein>
    <recommendedName>
        <fullName evidence="1">Large ribosomal subunit protein bL28</fullName>
    </recommendedName>
    <alternativeName>
        <fullName evidence="2">50S ribosomal protein L28</fullName>
    </alternativeName>
</protein>
<keyword id="KW-1185">Reference proteome</keyword>
<keyword id="KW-0687">Ribonucleoprotein</keyword>
<keyword id="KW-0689">Ribosomal protein</keyword>
<comment type="similarity">
    <text evidence="1">Belongs to the bacterial ribosomal protein bL28 family.</text>
</comment>